<evidence type="ECO:0000255" key="1">
    <source>
        <dbReference type="HAMAP-Rule" id="MF_00019"/>
    </source>
</evidence>
<name>PLSX_BRAHW</name>
<feature type="chain" id="PRO_1000193126" description="Phosphate acyltransferase">
    <location>
        <begin position="1"/>
        <end position="339"/>
    </location>
</feature>
<accession>C0R200</accession>
<comment type="function">
    <text evidence="1">Catalyzes the reversible formation of acyl-phosphate (acyl-PO(4)) from acyl-[acyl-carrier-protein] (acyl-ACP). This enzyme utilizes acyl-ACP as fatty acyl donor, but not acyl-CoA.</text>
</comment>
<comment type="catalytic activity">
    <reaction evidence="1">
        <text>a fatty acyl-[ACP] + phosphate = an acyl phosphate + holo-[ACP]</text>
        <dbReference type="Rhea" id="RHEA:42292"/>
        <dbReference type="Rhea" id="RHEA-COMP:9685"/>
        <dbReference type="Rhea" id="RHEA-COMP:14125"/>
        <dbReference type="ChEBI" id="CHEBI:43474"/>
        <dbReference type="ChEBI" id="CHEBI:59918"/>
        <dbReference type="ChEBI" id="CHEBI:64479"/>
        <dbReference type="ChEBI" id="CHEBI:138651"/>
        <dbReference type="EC" id="2.3.1.274"/>
    </reaction>
</comment>
<comment type="pathway">
    <text evidence="1">Lipid metabolism; phospholipid metabolism.</text>
</comment>
<comment type="subunit">
    <text evidence="1">Homodimer. Probably interacts with PlsY.</text>
</comment>
<comment type="subcellular location">
    <subcellularLocation>
        <location evidence="1">Cytoplasm</location>
    </subcellularLocation>
    <text evidence="1">Associated with the membrane possibly through PlsY.</text>
</comment>
<comment type="similarity">
    <text evidence="1">Belongs to the PlsX family.</text>
</comment>
<reference key="1">
    <citation type="journal article" date="2009" name="PLoS ONE">
        <title>Genome sequence of the pathogenic intestinal spirochete Brachyspira hyodysenteriae reveals adaptations to its lifestyle in the porcine large intestine.</title>
        <authorList>
            <person name="Bellgard M.I."/>
            <person name="Wanchanthuek P."/>
            <person name="La T."/>
            <person name="Ryan K."/>
            <person name="Moolhuijzen P."/>
            <person name="Albertyn Z."/>
            <person name="Shaban B."/>
            <person name="Motro Y."/>
            <person name="Dunn D.S."/>
            <person name="Schibeci D."/>
            <person name="Hunter A."/>
            <person name="Barrero R."/>
            <person name="Phillips N.D."/>
            <person name="Hampson D.J."/>
        </authorList>
    </citation>
    <scope>NUCLEOTIDE SEQUENCE [LARGE SCALE GENOMIC DNA]</scope>
    <source>
        <strain>ATCC 49526 / WA1</strain>
    </source>
</reference>
<organism>
    <name type="scientific">Brachyspira hyodysenteriae (strain ATCC 49526 / WA1)</name>
    <dbReference type="NCBI Taxonomy" id="565034"/>
    <lineage>
        <taxon>Bacteria</taxon>
        <taxon>Pseudomonadati</taxon>
        <taxon>Spirochaetota</taxon>
        <taxon>Spirochaetia</taxon>
        <taxon>Brachyspirales</taxon>
        <taxon>Brachyspiraceae</taxon>
        <taxon>Brachyspira</taxon>
    </lineage>
</organism>
<proteinExistence type="inferred from homology"/>
<gene>
    <name evidence="1" type="primary">plsX</name>
    <name type="ordered locus">BHWA1_01668</name>
</gene>
<dbReference type="EC" id="2.3.1.274" evidence="1"/>
<dbReference type="EMBL" id="CP001357">
    <property type="protein sequence ID" value="ACN84138.1"/>
    <property type="molecule type" value="Genomic_DNA"/>
</dbReference>
<dbReference type="RefSeq" id="WP_012671179.1">
    <property type="nucleotide sequence ID" value="NC_012225.1"/>
</dbReference>
<dbReference type="SMR" id="C0R200"/>
<dbReference type="STRING" id="565034.BHWA1_01668"/>
<dbReference type="GeneID" id="63962767"/>
<dbReference type="KEGG" id="bhy:BHWA1_01668"/>
<dbReference type="eggNOG" id="COG0416">
    <property type="taxonomic scope" value="Bacteria"/>
</dbReference>
<dbReference type="HOGENOM" id="CLU_039379_1_1_12"/>
<dbReference type="UniPathway" id="UPA00085"/>
<dbReference type="Proteomes" id="UP000001803">
    <property type="component" value="Chromosome"/>
</dbReference>
<dbReference type="GO" id="GO:0005737">
    <property type="term" value="C:cytoplasm"/>
    <property type="evidence" value="ECO:0007669"/>
    <property type="project" value="UniProtKB-SubCell"/>
</dbReference>
<dbReference type="GO" id="GO:0043811">
    <property type="term" value="F:phosphate:acyl-[acyl carrier protein] acyltransferase activity"/>
    <property type="evidence" value="ECO:0007669"/>
    <property type="project" value="UniProtKB-UniRule"/>
</dbReference>
<dbReference type="GO" id="GO:0006633">
    <property type="term" value="P:fatty acid biosynthetic process"/>
    <property type="evidence" value="ECO:0007669"/>
    <property type="project" value="UniProtKB-UniRule"/>
</dbReference>
<dbReference type="GO" id="GO:0008654">
    <property type="term" value="P:phospholipid biosynthetic process"/>
    <property type="evidence" value="ECO:0007669"/>
    <property type="project" value="UniProtKB-KW"/>
</dbReference>
<dbReference type="Gene3D" id="3.40.718.10">
    <property type="entry name" value="Isopropylmalate Dehydrogenase"/>
    <property type="match status" value="1"/>
</dbReference>
<dbReference type="HAMAP" id="MF_00019">
    <property type="entry name" value="PlsX"/>
    <property type="match status" value="1"/>
</dbReference>
<dbReference type="InterPro" id="IPR003664">
    <property type="entry name" value="FA_synthesis"/>
</dbReference>
<dbReference type="InterPro" id="IPR012281">
    <property type="entry name" value="Phospholipid_synth_PlsX-like"/>
</dbReference>
<dbReference type="NCBIfam" id="TIGR00182">
    <property type="entry name" value="plsX"/>
    <property type="match status" value="1"/>
</dbReference>
<dbReference type="PANTHER" id="PTHR30100">
    <property type="entry name" value="FATTY ACID/PHOSPHOLIPID SYNTHESIS PROTEIN PLSX"/>
    <property type="match status" value="1"/>
</dbReference>
<dbReference type="PANTHER" id="PTHR30100:SF1">
    <property type="entry name" value="PHOSPHATE ACYLTRANSFERASE"/>
    <property type="match status" value="1"/>
</dbReference>
<dbReference type="Pfam" id="PF02504">
    <property type="entry name" value="FA_synthesis"/>
    <property type="match status" value="1"/>
</dbReference>
<dbReference type="PIRSF" id="PIRSF002465">
    <property type="entry name" value="Phsphlp_syn_PlsX"/>
    <property type="match status" value="1"/>
</dbReference>
<dbReference type="SUPFAM" id="SSF53659">
    <property type="entry name" value="Isocitrate/Isopropylmalate dehydrogenase-like"/>
    <property type="match status" value="1"/>
</dbReference>
<sequence length="339" mass="36914">MNLAIDVASGEKPLEELVSGAISALQENKDINLILVGNEKNISKAISKTKYDHNRIDIRHTDEIIDMNESPANGIKHKKNASVLLAARLVREKEADGFFSPGNTGATLAAALTEIGRLKGVMRPPLISTLPKLNGEFCMLDMGANVDCTTDYIVQFAVMGRVFAKRYLKIDNPRVGLLNIGEEDSKGNANTKKSFERLQKMKKINFIGNIEPNDMLKSDSVDVVVADGFDGNIVLKTIEGTASFVVNLLKEEVKKNPVSVMGGLMMKPVFNNLKSKMSSDSYGSAILLGLNGGAFVGHGKTSGVGMKNAVLNMYKFLDAKINEKIAKELYDSGAKRRIF</sequence>
<keyword id="KW-0963">Cytoplasm</keyword>
<keyword id="KW-0444">Lipid biosynthesis</keyword>
<keyword id="KW-0443">Lipid metabolism</keyword>
<keyword id="KW-0594">Phospholipid biosynthesis</keyword>
<keyword id="KW-1208">Phospholipid metabolism</keyword>
<keyword id="KW-0808">Transferase</keyword>
<protein>
    <recommendedName>
        <fullName evidence="1">Phosphate acyltransferase</fullName>
        <ecNumber evidence="1">2.3.1.274</ecNumber>
    </recommendedName>
    <alternativeName>
        <fullName evidence="1">Acyl-ACP phosphotransacylase</fullName>
    </alternativeName>
    <alternativeName>
        <fullName evidence="1">Acyl-[acyl-carrier-protein]--phosphate acyltransferase</fullName>
    </alternativeName>
    <alternativeName>
        <fullName evidence="1">Phosphate-acyl-ACP acyltransferase</fullName>
    </alternativeName>
</protein>